<gene>
    <name evidence="1" type="primary">tusA</name>
    <name type="ordered locus">ECIAI1_3617</name>
</gene>
<evidence type="ECO:0000255" key="1">
    <source>
        <dbReference type="HAMAP-Rule" id="MF_00413"/>
    </source>
</evidence>
<sequence length="81" mass="9095">MTDLFSSPDHTLDALGLRCPEPVMMVRKTVRNMQPGETLLIIADDPATTRDIPGFCTFMEHELVAKETDGLPYRYLIRKGG</sequence>
<organism>
    <name type="scientific">Escherichia coli O8 (strain IAI1)</name>
    <dbReference type="NCBI Taxonomy" id="585034"/>
    <lineage>
        <taxon>Bacteria</taxon>
        <taxon>Pseudomonadati</taxon>
        <taxon>Pseudomonadota</taxon>
        <taxon>Gammaproteobacteria</taxon>
        <taxon>Enterobacterales</taxon>
        <taxon>Enterobacteriaceae</taxon>
        <taxon>Escherichia</taxon>
    </lineage>
</organism>
<dbReference type="EMBL" id="CU928160">
    <property type="protein sequence ID" value="CAR00415.1"/>
    <property type="molecule type" value="Genomic_DNA"/>
</dbReference>
<dbReference type="RefSeq" id="WP_000130621.1">
    <property type="nucleotide sequence ID" value="NC_011741.1"/>
</dbReference>
<dbReference type="SMR" id="B7M2N3"/>
<dbReference type="GeneID" id="93778521"/>
<dbReference type="KEGG" id="ecr:ECIAI1_3617"/>
<dbReference type="HOGENOM" id="CLU_165255_5_0_6"/>
<dbReference type="GO" id="GO:0005737">
    <property type="term" value="C:cytoplasm"/>
    <property type="evidence" value="ECO:0007669"/>
    <property type="project" value="UniProtKB-SubCell"/>
</dbReference>
<dbReference type="GO" id="GO:0097163">
    <property type="term" value="F:sulfur carrier activity"/>
    <property type="evidence" value="ECO:0007669"/>
    <property type="project" value="UniProtKB-UniRule"/>
</dbReference>
<dbReference type="GO" id="GO:0002143">
    <property type="term" value="P:tRNA wobble position uridine thiolation"/>
    <property type="evidence" value="ECO:0007669"/>
    <property type="project" value="InterPro"/>
</dbReference>
<dbReference type="CDD" id="cd03423">
    <property type="entry name" value="SirA"/>
    <property type="match status" value="1"/>
</dbReference>
<dbReference type="FunFam" id="3.30.110.40:FF:000002">
    <property type="entry name" value="Sulfur carrier protein TusA"/>
    <property type="match status" value="1"/>
</dbReference>
<dbReference type="Gene3D" id="3.30.110.40">
    <property type="entry name" value="TusA-like domain"/>
    <property type="match status" value="1"/>
</dbReference>
<dbReference type="HAMAP" id="MF_00413">
    <property type="entry name" value="Thiourid_synth_A"/>
    <property type="match status" value="1"/>
</dbReference>
<dbReference type="InterPro" id="IPR022931">
    <property type="entry name" value="Sulphur_carrier_TusA"/>
</dbReference>
<dbReference type="InterPro" id="IPR001455">
    <property type="entry name" value="TusA-like"/>
</dbReference>
<dbReference type="InterPro" id="IPR036868">
    <property type="entry name" value="TusA-like_sf"/>
</dbReference>
<dbReference type="NCBIfam" id="NF001423">
    <property type="entry name" value="PRK00299.1"/>
    <property type="match status" value="1"/>
</dbReference>
<dbReference type="PANTHER" id="PTHR33279:SF2">
    <property type="entry name" value="SULFUR CARRIER PROTEIN TUSA"/>
    <property type="match status" value="1"/>
</dbReference>
<dbReference type="PANTHER" id="PTHR33279">
    <property type="entry name" value="SULFUR CARRIER PROTEIN YEDF-RELATED"/>
    <property type="match status" value="1"/>
</dbReference>
<dbReference type="Pfam" id="PF01206">
    <property type="entry name" value="TusA"/>
    <property type="match status" value="1"/>
</dbReference>
<dbReference type="SUPFAM" id="SSF64307">
    <property type="entry name" value="SirA-like"/>
    <property type="match status" value="1"/>
</dbReference>
<dbReference type="PROSITE" id="PS01148">
    <property type="entry name" value="UPF0033"/>
    <property type="match status" value="1"/>
</dbReference>
<comment type="function">
    <text evidence="1">Sulfur carrier protein involved in sulfur trafficking in the cell. Part of a sulfur-relay system required for 2-thiolation during synthesis of 2-thiouridine of the modified wobble base 5-methylaminomethyl-2-thiouridine (mnm(5)s(2)U) in tRNA. Interacts with IscS and stimulates its cysteine desulfurase activity. Accepts an activated sulfur from IscS, which is then transferred to TusD, and thus determines the direction of sulfur flow from IscS to 2-thiouridine formation. Also appears to be involved in sulfur transfer for the biosynthesis of molybdopterin.</text>
</comment>
<comment type="pathway">
    <text evidence="1">tRNA modification.</text>
</comment>
<comment type="subunit">
    <text evidence="1">Interacts with IscS.</text>
</comment>
<comment type="subcellular location">
    <subcellularLocation>
        <location evidence="1">Cytoplasm</location>
    </subcellularLocation>
</comment>
<comment type="similarity">
    <text evidence="1">Belongs to the sulfur carrier protein TusA family.</text>
</comment>
<feature type="chain" id="PRO_1000199920" description="Sulfur carrier protein TusA">
    <location>
        <begin position="1"/>
        <end position="81"/>
    </location>
</feature>
<feature type="active site" description="Cysteine persulfide intermediate" evidence="1">
    <location>
        <position position="19"/>
    </location>
</feature>
<reference key="1">
    <citation type="journal article" date="2009" name="PLoS Genet.">
        <title>Organised genome dynamics in the Escherichia coli species results in highly diverse adaptive paths.</title>
        <authorList>
            <person name="Touchon M."/>
            <person name="Hoede C."/>
            <person name="Tenaillon O."/>
            <person name="Barbe V."/>
            <person name="Baeriswyl S."/>
            <person name="Bidet P."/>
            <person name="Bingen E."/>
            <person name="Bonacorsi S."/>
            <person name="Bouchier C."/>
            <person name="Bouvet O."/>
            <person name="Calteau A."/>
            <person name="Chiapello H."/>
            <person name="Clermont O."/>
            <person name="Cruveiller S."/>
            <person name="Danchin A."/>
            <person name="Diard M."/>
            <person name="Dossat C."/>
            <person name="Karoui M.E."/>
            <person name="Frapy E."/>
            <person name="Garry L."/>
            <person name="Ghigo J.M."/>
            <person name="Gilles A.M."/>
            <person name="Johnson J."/>
            <person name="Le Bouguenec C."/>
            <person name="Lescat M."/>
            <person name="Mangenot S."/>
            <person name="Martinez-Jehanne V."/>
            <person name="Matic I."/>
            <person name="Nassif X."/>
            <person name="Oztas S."/>
            <person name="Petit M.A."/>
            <person name="Pichon C."/>
            <person name="Rouy Z."/>
            <person name="Ruf C.S."/>
            <person name="Schneider D."/>
            <person name="Tourret J."/>
            <person name="Vacherie B."/>
            <person name="Vallenet D."/>
            <person name="Medigue C."/>
            <person name="Rocha E.P.C."/>
            <person name="Denamur E."/>
        </authorList>
    </citation>
    <scope>NUCLEOTIDE SEQUENCE [LARGE SCALE GENOMIC DNA]</scope>
    <source>
        <strain>IAI1</strain>
    </source>
</reference>
<keyword id="KW-0963">Cytoplasm</keyword>
<keyword id="KW-0819">tRNA processing</keyword>
<name>TUSA_ECO8A</name>
<protein>
    <recommendedName>
        <fullName evidence="1">Sulfur carrier protein TusA</fullName>
    </recommendedName>
    <alternativeName>
        <fullName evidence="1">Sulfur mediator TusA</fullName>
    </alternativeName>
    <alternativeName>
        <fullName evidence="1">Sulfur transfer protein TusA</fullName>
    </alternativeName>
    <alternativeName>
        <fullName evidence="1">tRNA 2-thiouridine synthesizing protein A</fullName>
    </alternativeName>
</protein>
<accession>B7M2N3</accession>
<proteinExistence type="inferred from homology"/>